<evidence type="ECO:0000250" key="1">
    <source>
        <dbReference type="UniProtKB" id="Q06321"/>
    </source>
</evidence>
<evidence type="ECO:0000255" key="2"/>
<evidence type="ECO:0000255" key="3">
    <source>
        <dbReference type="PROSITE-ProRule" id="PRU00145"/>
    </source>
</evidence>
<evidence type="ECO:0000256" key="4">
    <source>
        <dbReference type="SAM" id="MobiDB-lite"/>
    </source>
</evidence>
<evidence type="ECO:0000305" key="5"/>
<dbReference type="EC" id="2.4.1.-" evidence="1"/>
<dbReference type="EC" id="2.4.1.173" evidence="1"/>
<dbReference type="EMBL" id="CR382137">
    <property type="protein sequence ID" value="CAR65878.1"/>
    <property type="molecule type" value="Genomic_DNA"/>
</dbReference>
<dbReference type="RefSeq" id="XP_002770537.1">
    <property type="nucleotide sequence ID" value="XM_002770491.1"/>
</dbReference>
<dbReference type="SMR" id="Q6BN88"/>
<dbReference type="FunCoup" id="Q6BN88">
    <property type="interactions" value="117"/>
</dbReference>
<dbReference type="STRING" id="284592.Q6BN88"/>
<dbReference type="GeneID" id="8998839"/>
<dbReference type="KEGG" id="dha:DEHA2E23738g"/>
<dbReference type="VEuPathDB" id="FungiDB:DEHA2E23738g"/>
<dbReference type="eggNOG" id="KOG1192">
    <property type="taxonomic scope" value="Eukaryota"/>
</dbReference>
<dbReference type="HOGENOM" id="CLU_000537_6_0_1"/>
<dbReference type="InParanoid" id="Q6BN88"/>
<dbReference type="OMA" id="HRYWAVL"/>
<dbReference type="OrthoDB" id="10261837at2759"/>
<dbReference type="BRENDA" id="2.4.1.173">
    <property type="organism ID" value="1111"/>
</dbReference>
<dbReference type="Proteomes" id="UP000000599">
    <property type="component" value="Chromosome E"/>
</dbReference>
<dbReference type="GO" id="GO:0005737">
    <property type="term" value="C:cytoplasm"/>
    <property type="evidence" value="ECO:0007669"/>
    <property type="project" value="UniProtKB-SubCell"/>
</dbReference>
<dbReference type="GO" id="GO:0016020">
    <property type="term" value="C:membrane"/>
    <property type="evidence" value="ECO:0007669"/>
    <property type="project" value="UniProtKB-SubCell"/>
</dbReference>
<dbReference type="GO" id="GO:0016906">
    <property type="term" value="F:sterol 3-beta-glucosyltransferase activity"/>
    <property type="evidence" value="ECO:0007669"/>
    <property type="project" value="UniProtKB-EC"/>
</dbReference>
<dbReference type="GO" id="GO:0032120">
    <property type="term" value="P:ascospore-type prospore membrane formation"/>
    <property type="evidence" value="ECO:0007669"/>
    <property type="project" value="EnsemblFungi"/>
</dbReference>
<dbReference type="GO" id="GO:0005975">
    <property type="term" value="P:carbohydrate metabolic process"/>
    <property type="evidence" value="ECO:0007669"/>
    <property type="project" value="InterPro"/>
</dbReference>
<dbReference type="GO" id="GO:0030259">
    <property type="term" value="P:lipid glycosylation"/>
    <property type="evidence" value="ECO:0007669"/>
    <property type="project" value="InterPro"/>
</dbReference>
<dbReference type="GO" id="GO:0016126">
    <property type="term" value="P:sterol biosynthetic process"/>
    <property type="evidence" value="ECO:0007669"/>
    <property type="project" value="UniProtKB-KW"/>
</dbReference>
<dbReference type="CDD" id="cd03784">
    <property type="entry name" value="GT1_Gtf-like"/>
    <property type="match status" value="1"/>
</dbReference>
<dbReference type="CDD" id="cd13216">
    <property type="entry name" value="PH-GRAM2_AGT26"/>
    <property type="match status" value="1"/>
</dbReference>
<dbReference type="FunFam" id="2.30.29.30:FF:000303">
    <property type="entry name" value="Sterol 3-beta-glucosyltransferase"/>
    <property type="match status" value="1"/>
</dbReference>
<dbReference type="FunFam" id="3.40.50.2000:FF:000029">
    <property type="entry name" value="Sterol 3-beta-glucosyltransferase"/>
    <property type="match status" value="1"/>
</dbReference>
<dbReference type="FunFam" id="3.40.50.2000:FF:000009">
    <property type="entry name" value="Sterol 3-beta-glucosyltransferase UGT80A2"/>
    <property type="match status" value="1"/>
</dbReference>
<dbReference type="Gene3D" id="3.40.50.2000">
    <property type="entry name" value="Glycogen Phosphorylase B"/>
    <property type="match status" value="2"/>
</dbReference>
<dbReference type="Gene3D" id="2.30.29.30">
    <property type="entry name" value="Pleckstrin-homology domain (PH domain)/Phosphotyrosine-binding domain (PTB)"/>
    <property type="match status" value="2"/>
</dbReference>
<dbReference type="InterPro" id="IPR048065">
    <property type="entry name" value="ATG26_PH_GRAM2"/>
</dbReference>
<dbReference type="InterPro" id="IPR010610">
    <property type="entry name" value="EryCIII-like_C"/>
</dbReference>
<dbReference type="InterPro" id="IPR050426">
    <property type="entry name" value="Glycosyltransferase_28"/>
</dbReference>
<dbReference type="InterPro" id="IPR004276">
    <property type="entry name" value="GlycoTrans_28_N"/>
</dbReference>
<dbReference type="InterPro" id="IPR004182">
    <property type="entry name" value="GRAM"/>
</dbReference>
<dbReference type="InterPro" id="IPR011993">
    <property type="entry name" value="PH-like_dom_sf"/>
</dbReference>
<dbReference type="InterPro" id="IPR001849">
    <property type="entry name" value="PH_domain"/>
</dbReference>
<dbReference type="InterPro" id="IPR002213">
    <property type="entry name" value="UDP_glucos_trans"/>
</dbReference>
<dbReference type="PANTHER" id="PTHR48050">
    <property type="entry name" value="STEROL 3-BETA-GLUCOSYLTRANSFERASE"/>
    <property type="match status" value="1"/>
</dbReference>
<dbReference type="PANTHER" id="PTHR48050:SF25">
    <property type="entry name" value="STEROL 3-BETA-GLUCOSYLTRANSFERASE"/>
    <property type="match status" value="1"/>
</dbReference>
<dbReference type="Pfam" id="PF06722">
    <property type="entry name" value="EryCIII-like_C"/>
    <property type="match status" value="1"/>
</dbReference>
<dbReference type="Pfam" id="PF03033">
    <property type="entry name" value="Glyco_transf_28"/>
    <property type="match status" value="1"/>
</dbReference>
<dbReference type="Pfam" id="PF02893">
    <property type="entry name" value="GRAM"/>
    <property type="match status" value="1"/>
</dbReference>
<dbReference type="SMART" id="SM00568">
    <property type="entry name" value="GRAM"/>
    <property type="match status" value="2"/>
</dbReference>
<dbReference type="SMART" id="SM00233">
    <property type="entry name" value="PH"/>
    <property type="match status" value="1"/>
</dbReference>
<dbReference type="SUPFAM" id="SSF50729">
    <property type="entry name" value="PH domain-like"/>
    <property type="match status" value="1"/>
</dbReference>
<dbReference type="SUPFAM" id="SSF53756">
    <property type="entry name" value="UDP-Glycosyltransferase/glycogen phosphorylase"/>
    <property type="match status" value="1"/>
</dbReference>
<dbReference type="PROSITE" id="PS50003">
    <property type="entry name" value="PH_DOMAIN"/>
    <property type="match status" value="1"/>
</dbReference>
<protein>
    <recommendedName>
        <fullName evidence="5">Sterol 3-beta-glucosyltransferase</fullName>
        <ecNumber evidence="1">2.4.1.-</ecNumber>
        <ecNumber evidence="1">2.4.1.173</ecNumber>
    </recommendedName>
    <alternativeName>
        <fullName evidence="1">Autophagy-related protein 26</fullName>
    </alternativeName>
</protein>
<name>ATG26_DEBHA</name>
<reference key="1">
    <citation type="journal article" date="2004" name="Nature">
        <title>Genome evolution in yeasts.</title>
        <authorList>
            <person name="Dujon B."/>
            <person name="Sherman D."/>
            <person name="Fischer G."/>
            <person name="Durrens P."/>
            <person name="Casaregola S."/>
            <person name="Lafontaine I."/>
            <person name="de Montigny J."/>
            <person name="Marck C."/>
            <person name="Neuveglise C."/>
            <person name="Talla E."/>
            <person name="Goffard N."/>
            <person name="Frangeul L."/>
            <person name="Aigle M."/>
            <person name="Anthouard V."/>
            <person name="Babour A."/>
            <person name="Barbe V."/>
            <person name="Barnay S."/>
            <person name="Blanchin S."/>
            <person name="Beckerich J.-M."/>
            <person name="Beyne E."/>
            <person name="Bleykasten C."/>
            <person name="Boisrame A."/>
            <person name="Boyer J."/>
            <person name="Cattolico L."/>
            <person name="Confanioleri F."/>
            <person name="de Daruvar A."/>
            <person name="Despons L."/>
            <person name="Fabre E."/>
            <person name="Fairhead C."/>
            <person name="Ferry-Dumazet H."/>
            <person name="Groppi A."/>
            <person name="Hantraye F."/>
            <person name="Hennequin C."/>
            <person name="Jauniaux N."/>
            <person name="Joyet P."/>
            <person name="Kachouri R."/>
            <person name="Kerrest A."/>
            <person name="Koszul R."/>
            <person name="Lemaire M."/>
            <person name="Lesur I."/>
            <person name="Ma L."/>
            <person name="Muller H."/>
            <person name="Nicaud J.-M."/>
            <person name="Nikolski M."/>
            <person name="Oztas S."/>
            <person name="Ozier-Kalogeropoulos O."/>
            <person name="Pellenz S."/>
            <person name="Potier S."/>
            <person name="Richard G.-F."/>
            <person name="Straub M.-L."/>
            <person name="Suleau A."/>
            <person name="Swennen D."/>
            <person name="Tekaia F."/>
            <person name="Wesolowski-Louvel M."/>
            <person name="Westhof E."/>
            <person name="Wirth B."/>
            <person name="Zeniou-Meyer M."/>
            <person name="Zivanovic Y."/>
            <person name="Bolotin-Fukuhara M."/>
            <person name="Thierry A."/>
            <person name="Bouchier C."/>
            <person name="Caudron B."/>
            <person name="Scarpelli C."/>
            <person name="Gaillardin C."/>
            <person name="Weissenbach J."/>
            <person name="Wincker P."/>
            <person name="Souciet J.-L."/>
        </authorList>
    </citation>
    <scope>NUCLEOTIDE SEQUENCE [LARGE SCALE GENOMIC DNA]</scope>
    <source>
        <strain>ATCC 36239 / CBS 767 / BCRC 21394 / JCM 1990 / NBRC 0083 / IGC 2968</strain>
    </source>
</reference>
<proteinExistence type="inferred from homology"/>
<keyword id="KW-0963">Cytoplasm</keyword>
<keyword id="KW-0328">Glycosyltransferase</keyword>
<keyword id="KW-0444">Lipid biosynthesis</keyword>
<keyword id="KW-0443">Lipid metabolism</keyword>
<keyword id="KW-0472">Membrane</keyword>
<keyword id="KW-1185">Reference proteome</keyword>
<keyword id="KW-0677">Repeat</keyword>
<keyword id="KW-0752">Steroid biosynthesis</keyword>
<keyword id="KW-0753">Steroid metabolism</keyword>
<keyword id="KW-0756">Sterol biosynthesis</keyword>
<keyword id="KW-1207">Sterol metabolism</keyword>
<keyword id="KW-0808">Transferase</keyword>
<organism>
    <name type="scientific">Debaryomyces hansenii (strain ATCC 36239 / CBS 767 / BCRC 21394 / JCM 1990 / NBRC 0083 / IGC 2968)</name>
    <name type="common">Yeast</name>
    <name type="synonym">Torulaspora hansenii</name>
    <dbReference type="NCBI Taxonomy" id="284592"/>
    <lineage>
        <taxon>Eukaryota</taxon>
        <taxon>Fungi</taxon>
        <taxon>Dikarya</taxon>
        <taxon>Ascomycota</taxon>
        <taxon>Saccharomycotina</taxon>
        <taxon>Pichiomycetes</taxon>
        <taxon>Debaryomycetaceae</taxon>
        <taxon>Debaryomyces</taxon>
    </lineage>
</organism>
<feature type="chain" id="PRO_0000215609" description="Sterol 3-beta-glucosyltransferase">
    <location>
        <begin position="1"/>
        <end position="1574"/>
    </location>
</feature>
<feature type="domain" description="GRAM 1" evidence="2">
    <location>
        <begin position="253"/>
        <end position="288"/>
    </location>
</feature>
<feature type="domain" description="PH" evidence="3">
    <location>
        <begin position="323"/>
        <end position="471"/>
    </location>
</feature>
<feature type="domain" description="GRAM 2" evidence="2">
    <location>
        <begin position="854"/>
        <end position="920"/>
    </location>
</feature>
<feature type="region of interest" description="Disordered" evidence="4">
    <location>
        <begin position="37"/>
        <end position="61"/>
    </location>
</feature>
<feature type="region of interest" description="Disordered" evidence="4">
    <location>
        <begin position="102"/>
        <end position="170"/>
    </location>
</feature>
<feature type="region of interest" description="Disordered" evidence="4">
    <location>
        <begin position="389"/>
        <end position="413"/>
    </location>
</feature>
<feature type="region of interest" description="Disordered" evidence="4">
    <location>
        <begin position="538"/>
        <end position="559"/>
    </location>
</feature>
<feature type="region of interest" description="Disordered" evidence="4">
    <location>
        <begin position="651"/>
        <end position="722"/>
    </location>
</feature>
<feature type="region of interest" description="Disordered" evidence="4">
    <location>
        <begin position="774"/>
        <end position="806"/>
    </location>
</feature>
<feature type="region of interest" description="Disordered" evidence="4">
    <location>
        <begin position="964"/>
        <end position="996"/>
    </location>
</feature>
<feature type="region of interest" description="Disordered" evidence="4">
    <location>
        <begin position="1505"/>
        <end position="1574"/>
    </location>
</feature>
<feature type="compositionally biased region" description="Polar residues" evidence="4">
    <location>
        <begin position="37"/>
        <end position="48"/>
    </location>
</feature>
<feature type="compositionally biased region" description="Basic and acidic residues" evidence="4">
    <location>
        <begin position="107"/>
        <end position="121"/>
    </location>
</feature>
<feature type="compositionally biased region" description="Basic and acidic residues" evidence="4">
    <location>
        <begin position="128"/>
        <end position="138"/>
    </location>
</feature>
<feature type="compositionally biased region" description="Acidic residues" evidence="4">
    <location>
        <begin position="139"/>
        <end position="148"/>
    </location>
</feature>
<feature type="compositionally biased region" description="Basic and acidic residues" evidence="4">
    <location>
        <begin position="149"/>
        <end position="170"/>
    </location>
</feature>
<feature type="compositionally biased region" description="Polar residues" evidence="4">
    <location>
        <begin position="692"/>
        <end position="701"/>
    </location>
</feature>
<feature type="compositionally biased region" description="Basic and acidic residues" evidence="4">
    <location>
        <begin position="702"/>
        <end position="711"/>
    </location>
</feature>
<feature type="compositionally biased region" description="Polar residues" evidence="4">
    <location>
        <begin position="712"/>
        <end position="722"/>
    </location>
</feature>
<feature type="compositionally biased region" description="Basic and acidic residues" evidence="4">
    <location>
        <begin position="964"/>
        <end position="976"/>
    </location>
</feature>
<feature type="compositionally biased region" description="Polar residues" evidence="4">
    <location>
        <begin position="985"/>
        <end position="996"/>
    </location>
</feature>
<feature type="compositionally biased region" description="Basic and acidic residues" evidence="4">
    <location>
        <begin position="1510"/>
        <end position="1533"/>
    </location>
</feature>
<feature type="compositionally biased region" description="Polar residues" evidence="4">
    <location>
        <begin position="1563"/>
        <end position="1574"/>
    </location>
</feature>
<feature type="binding site" evidence="1">
    <location>
        <position position="1057"/>
    </location>
    <ligand>
        <name>UDP-alpha-D-glucose</name>
        <dbReference type="ChEBI" id="CHEBI:58885"/>
    </ligand>
</feature>
<feature type="binding site" evidence="1">
    <location>
        <position position="1058"/>
    </location>
    <ligand>
        <name>UDP-alpha-D-glucose</name>
        <dbReference type="ChEBI" id="CHEBI:58885"/>
    </ligand>
</feature>
<feature type="binding site" evidence="1">
    <location>
        <position position="1060"/>
    </location>
    <ligand>
        <name>UDP-alpha-D-glucose</name>
        <dbReference type="ChEBI" id="CHEBI:58885"/>
    </ligand>
</feature>
<feature type="binding site" evidence="1">
    <location>
        <position position="1333"/>
    </location>
    <ligand>
        <name>UDP-alpha-D-glucose</name>
        <dbReference type="ChEBI" id="CHEBI:58885"/>
    </ligand>
</feature>
<feature type="binding site" evidence="1">
    <location>
        <position position="1364"/>
    </location>
    <ligand>
        <name>UDP-alpha-D-glucose</name>
        <dbReference type="ChEBI" id="CHEBI:58885"/>
    </ligand>
</feature>
<feature type="binding site" evidence="1">
    <location>
        <position position="1366"/>
    </location>
    <ligand>
        <name>UDP-alpha-D-glucose</name>
        <dbReference type="ChEBI" id="CHEBI:58885"/>
    </ligand>
</feature>
<feature type="binding site" evidence="1">
    <location>
        <position position="1379"/>
    </location>
    <ligand>
        <name>UDP-alpha-D-glucose</name>
        <dbReference type="ChEBI" id="CHEBI:58885"/>
    </ligand>
</feature>
<feature type="binding site" evidence="1">
    <location>
        <position position="1382"/>
    </location>
    <ligand>
        <name>UDP-alpha-D-glucose</name>
        <dbReference type="ChEBI" id="CHEBI:58885"/>
    </ligand>
</feature>
<feature type="binding site" evidence="1">
    <location>
        <position position="1383"/>
    </location>
    <ligand>
        <name>UDP-alpha-D-glucose</name>
        <dbReference type="ChEBI" id="CHEBI:58885"/>
    </ligand>
</feature>
<feature type="binding site" evidence="1">
    <location>
        <position position="1384"/>
    </location>
    <ligand>
        <name>UDP-alpha-D-glucose</name>
        <dbReference type="ChEBI" id="CHEBI:58885"/>
    </ligand>
</feature>
<feature type="binding site" evidence="1">
    <location>
        <position position="1403"/>
    </location>
    <ligand>
        <name>UDP-alpha-D-glucose</name>
        <dbReference type="ChEBI" id="CHEBI:58885"/>
    </ligand>
</feature>
<feature type="binding site" evidence="1">
    <location>
        <position position="1404"/>
    </location>
    <ligand>
        <name>UDP-alpha-D-glucose</name>
        <dbReference type="ChEBI" id="CHEBI:58885"/>
    </ligand>
</feature>
<accession>Q6BN88</accession>
<accession>B5RU66</accession>
<gene>
    <name evidence="1" type="primary">ATG26</name>
    <name type="ordered locus">DEHA2E23738g</name>
</gene>
<comment type="function">
    <text evidence="1">Sterol glycosyltransferase responsible for the glycosylation of ergosterol to form ergosterol-glucoside.</text>
</comment>
<comment type="catalytic activity">
    <reaction evidence="1">
        <text>a sterol + UDP-alpha-D-glucose = a sterol 3-beta-D-glucoside + UDP + H(+)</text>
        <dbReference type="Rhea" id="RHEA:22724"/>
        <dbReference type="ChEBI" id="CHEBI:15378"/>
        <dbReference type="ChEBI" id="CHEBI:15889"/>
        <dbReference type="ChEBI" id="CHEBI:37424"/>
        <dbReference type="ChEBI" id="CHEBI:58223"/>
        <dbReference type="ChEBI" id="CHEBI:58885"/>
        <dbReference type="EC" id="2.4.1.173"/>
    </reaction>
    <physiologicalReaction direction="left-to-right" evidence="1">
        <dbReference type="Rhea" id="RHEA:22725"/>
    </physiologicalReaction>
</comment>
<comment type="catalytic activity">
    <reaction evidence="1">
        <text>ergosterol + UDP-alpha-D-glucose = ergosteryl 3-beta-D-glucoside + UDP + H(+)</text>
        <dbReference type="Rhea" id="RHEA:61836"/>
        <dbReference type="ChEBI" id="CHEBI:15378"/>
        <dbReference type="ChEBI" id="CHEBI:16933"/>
        <dbReference type="ChEBI" id="CHEBI:52973"/>
        <dbReference type="ChEBI" id="CHEBI:58223"/>
        <dbReference type="ChEBI" id="CHEBI:58885"/>
    </reaction>
    <physiologicalReaction direction="left-to-right" evidence="1">
        <dbReference type="Rhea" id="RHEA:61837"/>
    </physiologicalReaction>
</comment>
<comment type="subcellular location">
    <subcellularLocation>
        <location evidence="1">Cytoplasm</location>
    </subcellularLocation>
    <subcellularLocation>
        <location evidence="1">Membrane</location>
        <topology evidence="1">Peripheral membrane protein</topology>
    </subcellularLocation>
</comment>
<comment type="similarity">
    <text evidence="5">Belongs to the glycosyltransferase 28 family.</text>
</comment>
<sequence>MLPKEDKVNSNHFKGVNDAHKTSLYKRLSSSVIPPLTFLNQNPASPNNEEVPGNNEANKDEKTFSDDEDIAHPIGSVGSSNNFLSFLYAGMGKLSDLKGNDASNANEAKDSKLNDNLRSSRNEQANEPEYRREYKLDYDIDESEEDDIESTRDENTLKPKTEDTSVHSKLDPEERLENVVNMLFDDHDESTTALASDPSKGTVFQQSVLKNFDPFRIQQTELLKLKDITLSTEEDESEEQKLKKKFFRLKVADKLKRVFELNDDDYFYGNYNVWLVRDVLLQGHIYLTKESILFFTFLPKRHNTISASKGTTGGFQHHDDSHDVIQSGSLGMKTALYGDTVFSTPLTHRFWVILRNETITVYHSPTDLYFPITLIDLKSCVRAEVIEKGRNDNASPRPDLHRNDSQEVSSGDEEVEFSNMLNSNYQLEDNSENVSGGYWFKVVTKKKTHKFHSDSLYSARQWVNNIVKVVFQLHNSNANNEVIMKIPINDVLSFDLNEVFGASEKNSDSNGGEEKPKVLNVKYLENGSKGRYALSASRMKKELKNKTKKKMKKNSGNEPDELLSENTYFLLFKDGDEVFSTLNEIVNENHHSSNIFRNRHNSISKKYTSEKGSNWNRPFTHKDEEIHIPRAISTLTTDHFQNSIIDQIEEASHRNTHTQNTDLASPRSECGLTHSVSTSPQSKIRKFGKTLITPSKIFSNKSRTESEKSTPDRSQTTSPVQGINLSLSGLKDLNMAFEASQKNYEVSCTRYSHTEENSTNSPSNFQNNTLSKADALSPQIKSPQPLEAGPLNLTDPSEYEDNKKKNSTLSSIGKSIKAMSSIRSKLAAVNHYEQLDENDTYFIRDVSAREVDTRHFQERFSFNNKKQLIASYHCHIIRAVPVFGKVYLGDSEICFRSMLPGVSTRMILPLIDVDTCSKEKGSNIAYSGLVLVIRGYDELFMEFSVQSARDDCLAMILRQLEKNRESGNESSDDNKSAQHGKSGCFQKTPSSAETTKSSNEIKLAQWRIENARLKLFEDKINAAAGLHVPIVLEDSPFYKTEIRPSTSFNFTLLTIGSRGDVQPYIALGKGLLNEGHNVTIATHSDFEEWIVGHGIKFKTIAGNPVELMSLMVTHGSMSLSFLKEASSKFRGWIQELLDTSWKACQGSDILIESPSAMVGAHIAEALGIPYIRAFTMPWTRTRAYPHAFIVPDKKKGGSYNYITHLMFETVLWKGISSQVNKWRRESLGLPRTNLYRLAQYDIPFLYNISPTIFPPSVDFPDWVKVTGYWFLDEGAADDFEPSKELVEFMNKARADDKKVVYIGFGSIVVEDAKSLTKAIVEAVLNADVRCILNKGWSDRNSSPAKDNAEPEVELPEEIYNSGSIPHDWLFPKIDAAVHHGGSGTTGATMRAGIPTIIKPFFGDQFFYSSRIEDIGAGIGLKKLNARSLCTALKTATSDAKMITKAKKISERLKQENGVLNAIEAIYYELEYARSLILAKQHENTKHDLKSGTQTPVVNETNEYFDSDTYDADHDSDKESDHDQTYEQDNHSDYDVANDDNMTEIVEPSLEDGNDTVRIAPDSGNDNTTVTDANK</sequence>